<keyword id="KW-0002">3D-structure</keyword>
<keyword id="KW-1003">Cell membrane</keyword>
<keyword id="KW-0963">Cytoplasm</keyword>
<keyword id="KW-0325">Glycoprotein</keyword>
<keyword id="KW-0406">Ion transport</keyword>
<keyword id="KW-0472">Membrane</keyword>
<keyword id="KW-0479">Metal-binding</keyword>
<keyword id="KW-0597">Phosphoprotein</keyword>
<keyword id="KW-1185">Reference proteome</keyword>
<keyword id="KW-0915">Sodium</keyword>
<keyword id="KW-0739">Sodium transport</keyword>
<keyword id="KW-0769">Symport</keyword>
<keyword id="KW-0812">Transmembrane</keyword>
<keyword id="KW-1133">Transmembrane helix</keyword>
<keyword id="KW-0813">Transport</keyword>
<protein>
    <recommendedName>
        <fullName>Sodium/iodide cotransporter</fullName>
        <shortName>Na(+)/I(-) cotransporter</shortName>
    </recommendedName>
    <alternativeName>
        <fullName evidence="8">Sodium-iodide symporter</fullName>
        <shortName>Na(+)/I(-) symporter</shortName>
    </alternativeName>
    <alternativeName>
        <fullName>Solute carrier family 5 member 5</fullName>
    </alternativeName>
</protein>
<organism>
    <name type="scientific">Rattus norvegicus</name>
    <name type="common">Rat</name>
    <dbReference type="NCBI Taxonomy" id="10116"/>
    <lineage>
        <taxon>Eukaryota</taxon>
        <taxon>Metazoa</taxon>
        <taxon>Chordata</taxon>
        <taxon>Craniata</taxon>
        <taxon>Vertebrata</taxon>
        <taxon>Euteleostomi</taxon>
        <taxon>Mammalia</taxon>
        <taxon>Eutheria</taxon>
        <taxon>Euarchontoglires</taxon>
        <taxon>Glires</taxon>
        <taxon>Rodentia</taxon>
        <taxon>Myomorpha</taxon>
        <taxon>Muroidea</taxon>
        <taxon>Muridae</taxon>
        <taxon>Murinae</taxon>
        <taxon>Rattus</taxon>
    </lineage>
</organism>
<feature type="chain" id="PRO_0000105385" description="Sodium/iodide cotransporter">
    <location>
        <begin position="1"/>
        <end position="618"/>
    </location>
</feature>
<feature type="topological domain" description="Extracellular" evidence="5 10 11 12">
    <location>
        <begin position="1"/>
        <end position="14"/>
    </location>
</feature>
<feature type="transmembrane region" description="Helical; Name=1" evidence="5 10 11 12">
    <location>
        <begin position="15"/>
        <end position="31"/>
    </location>
</feature>
<feature type="topological domain" description="Cytoplasmic" evidence="5 10 11 12">
    <location>
        <begin position="32"/>
        <end position="56"/>
    </location>
</feature>
<feature type="transmembrane region" description="Discontinuously helical; Name=2" evidence="5 10 11 12">
    <location>
        <begin position="57"/>
        <end position="80"/>
    </location>
</feature>
<feature type="topological domain" description="Extracellular" evidence="5 10 11 12">
    <location>
        <begin position="81"/>
        <end position="84"/>
    </location>
</feature>
<feature type="transmembrane region" description="Helical; Name=3" evidence="5 10 11 12">
    <location>
        <begin position="85"/>
        <end position="105"/>
    </location>
</feature>
<feature type="topological domain" description="Cytoplasmic" evidence="5 10 11 12">
    <location>
        <begin position="106"/>
        <end position="130"/>
    </location>
</feature>
<feature type="transmembrane region" description="Helical; Name=4" evidence="5 10 11 12">
    <location>
        <begin position="131"/>
        <end position="157"/>
    </location>
</feature>
<feature type="topological domain" description="Extracellular" evidence="5 10 11 12">
    <location>
        <begin position="158"/>
        <end position="163"/>
    </location>
</feature>
<feature type="transmembrane region" description="Helical; Name=5" evidence="5 10 11 12">
    <location>
        <begin position="164"/>
        <end position="181"/>
    </location>
</feature>
<feature type="topological domain" description="Cytoplasmic" evidence="5 10 11 12">
    <location>
        <begin position="182"/>
        <end position="189"/>
    </location>
</feature>
<feature type="transmembrane region" description="Helical; Name=6" evidence="5 10 11 12">
    <location>
        <begin position="190"/>
        <end position="208"/>
    </location>
</feature>
<feature type="topological domain" description="Extracellular" evidence="5 10 11 12">
    <location>
        <begin position="209"/>
        <end position="243"/>
    </location>
</feature>
<feature type="transmembrane region" description="Discontinuously helical; Name=7" evidence="5 10 11 12">
    <location>
        <begin position="244"/>
        <end position="266"/>
    </location>
</feature>
<feature type="topological domain" description="Cytoplasmic" evidence="5 10 11 12">
    <location>
        <begin position="267"/>
        <end position="278"/>
    </location>
</feature>
<feature type="transmembrane region" description="Helical; Name=8" evidence="5 10 11 12">
    <location>
        <begin position="279"/>
        <end position="301"/>
    </location>
</feature>
<feature type="topological domain" description="Extracellular" evidence="5 10 11 12">
    <location>
        <begin position="302"/>
        <end position="335"/>
    </location>
</feature>
<feature type="transmembrane region" description="Helical; Name=9" evidence="5 10 11 12">
    <location>
        <begin position="336"/>
        <end position="363"/>
    </location>
</feature>
<feature type="topological domain" description="Cytoplasmic" evidence="5 10 11 12">
    <location>
        <begin position="364"/>
        <end position="386"/>
    </location>
</feature>
<feature type="transmembrane region" description="Helical; Name=10" evidence="5 10 11 12">
    <location>
        <begin position="387"/>
        <end position="408"/>
    </location>
</feature>
<feature type="topological domain" description="Extracellular" evidence="5 10 11 12">
    <location>
        <begin position="409"/>
        <end position="411"/>
    </location>
</feature>
<feature type="transmembrane region" description="Helical; Name=11" evidence="5 10 11 12">
    <location>
        <begin position="412"/>
        <end position="437"/>
    </location>
</feature>
<feature type="topological domain" description="Cytoplasmic" evidence="5 10 11 12">
    <location>
        <begin position="438"/>
        <end position="441"/>
    </location>
</feature>
<feature type="transmembrane region" description="Helical; Name=12" evidence="5 10 11 12">
    <location>
        <begin position="442"/>
        <end position="465"/>
    </location>
</feature>
<feature type="topological domain" description="Extracellular" evidence="5 10 11 12">
    <location>
        <begin position="466"/>
        <end position="520"/>
    </location>
</feature>
<feature type="transmembrane region" description="Helical; Name=13" evidence="5 10 11 12">
    <location>
        <begin position="521"/>
        <end position="545"/>
    </location>
</feature>
<feature type="topological domain" description="Cytoplasmic" evidence="5 10 11 12">
    <location>
        <begin position="546"/>
        <end position="618"/>
    </location>
</feature>
<feature type="region of interest" description="Disordered" evidence="3">
    <location>
        <begin position="587"/>
        <end position="618"/>
    </location>
</feature>
<feature type="binding site" evidence="5 12">
    <location>
        <position position="69"/>
    </location>
    <ligand>
        <name>Na(+)</name>
        <dbReference type="ChEBI" id="CHEBI:29101"/>
        <label>1</label>
    </ligand>
</feature>
<feature type="binding site" evidence="5 12">
    <location>
        <position position="71"/>
    </location>
    <ligand>
        <name>Na(+)</name>
        <dbReference type="ChEBI" id="CHEBI:29101"/>
        <label>1</label>
    </ligand>
</feature>
<feature type="binding site" evidence="5 12">
    <location>
        <position position="72"/>
    </location>
    <ligand>
        <name>Na(+)</name>
        <dbReference type="ChEBI" id="CHEBI:29101"/>
        <label>1</label>
    </ligand>
</feature>
<feature type="binding site" evidence="5 11 12">
    <location>
        <position position="72"/>
    </location>
    <ligand>
        <name>Na(+)</name>
        <dbReference type="ChEBI" id="CHEBI:29101"/>
        <label>2</label>
    </ligand>
</feature>
<feature type="binding site" evidence="5 12">
    <location>
        <position position="76"/>
    </location>
    <ligand>
        <name>iodide</name>
        <dbReference type="ChEBI" id="CHEBI:16382"/>
    </ligand>
</feature>
<feature type="binding site" evidence="5 12">
    <location>
        <position position="90"/>
    </location>
    <ligand>
        <name>iodide</name>
        <dbReference type="ChEBI" id="CHEBI:16382"/>
    </ligand>
</feature>
<feature type="binding site" evidence="5 12">
    <location>
        <position position="144"/>
    </location>
    <ligand>
        <name>Na(+)</name>
        <dbReference type="ChEBI" id="CHEBI:29101"/>
        <label>1</label>
    </ligand>
</feature>
<feature type="binding site" evidence="5 12">
    <location>
        <position position="144"/>
    </location>
    <ligand>
        <name>Na(+)</name>
        <dbReference type="ChEBI" id="CHEBI:29101"/>
        <label>2</label>
    </ligand>
</feature>
<feature type="binding site" evidence="5 12">
    <location>
        <position position="255"/>
    </location>
    <ligand>
        <name>iodide</name>
        <dbReference type="ChEBI" id="CHEBI:16382"/>
    </ligand>
</feature>
<feature type="binding site" evidence="5 12">
    <location>
        <position position="258"/>
    </location>
    <ligand>
        <name>Na(+)</name>
        <dbReference type="ChEBI" id="CHEBI:29101"/>
        <label>2</label>
    </ligand>
</feature>
<feature type="binding site" evidence="5 12">
    <location>
        <position position="413"/>
    </location>
    <ligand>
        <name>iodide</name>
        <dbReference type="ChEBI" id="CHEBI:16382"/>
    </ligand>
</feature>
<feature type="binding site" evidence="5 11 12">
    <location>
        <position position="416"/>
    </location>
    <ligand>
        <name>Na(+)</name>
        <dbReference type="ChEBI" id="CHEBI:29101"/>
        <label>2</label>
    </ligand>
</feature>
<feature type="binding site" evidence="5 12">
    <location>
        <position position="417"/>
    </location>
    <ligand>
        <name>iodide</name>
        <dbReference type="ChEBI" id="CHEBI:16382"/>
    </ligand>
</feature>
<feature type="binding site" evidence="5 11 12">
    <location>
        <position position="417"/>
    </location>
    <ligand>
        <name>Na(+)</name>
        <dbReference type="ChEBI" id="CHEBI:29101"/>
        <label>2</label>
    </ligand>
</feature>
<feature type="modified residue" description="Phosphoserine; by PKA" evidence="2">
    <location>
        <position position="551"/>
    </location>
</feature>
<feature type="glycosylation site" description="N-linked (GlcNAc...) asparagine" evidence="2">
    <location>
        <position position="485"/>
    </location>
</feature>
<feature type="glycosylation site" description="N-linked (GlcNAc...) asparagine" evidence="2">
    <location>
        <position position="497"/>
    </location>
</feature>
<feature type="mutagenesis site" description="Impairs sodium and iodide transport activity." evidence="5">
    <original>S</original>
    <variation>A</variation>
    <variation>C</variation>
    <variation>D</variation>
    <variation>K</variation>
    <variation>T</variation>
    <location>
        <position position="69"/>
    </location>
</feature>
<feature type="mutagenesis site" description="Impairs sodium and iodide transport activity." evidence="5">
    <original>Q</original>
    <variation>A</variation>
    <variation>C</variation>
    <variation>E</variation>
    <variation>H</variation>
    <variation>N</variation>
    <variation>S</variation>
    <variation>T</variation>
    <location>
        <position position="72"/>
    </location>
</feature>
<feature type="mutagenesis site" description="Impairs sodium and iodide transport activity." evidence="5">
    <original>Y</original>
    <variation>A</variation>
    <variation>E</variation>
    <variation>H</variation>
    <variation>K</variation>
    <variation>L</variation>
    <location>
        <position position="144"/>
    </location>
</feature>
<feature type="mutagenesis site" description="No effect on sodium and iodide transport activity; when associated with Q-485 and Q-497." evidence="5">
    <original>N</original>
    <variation>Q</variation>
    <location>
        <position position="225"/>
    </location>
</feature>
<feature type="mutagenesis site" description="Impairs sodium and iodide transport activity." evidence="5">
    <original>S</original>
    <variation>A</variation>
    <variation>H</variation>
    <variation>T</variation>
    <location>
        <position position="416"/>
    </location>
</feature>
<feature type="mutagenesis site" description="Impairs sodium and iodide transport activity." evidence="5">
    <original>F</original>
    <variation>H</variation>
    <variation>Y</variation>
    <location>
        <position position="417"/>
    </location>
</feature>
<feature type="mutagenesis site" description="No effect on sodium and iodide transport activity; when associated with Q-225 and Q-497." evidence="5">
    <original>N</original>
    <variation>Q</variation>
    <location>
        <position position="485"/>
    </location>
</feature>
<feature type="mutagenesis site" description="No effect on sodium and iodide transport activity; when associated with Q-225 and Q-485." evidence="5">
    <original>N</original>
    <variation>Q</variation>
    <location>
        <position position="497"/>
    </location>
</feature>
<feature type="helix" evidence="15">
    <location>
        <begin position="14"/>
        <end position="35"/>
    </location>
</feature>
<feature type="helix" evidence="13">
    <location>
        <begin position="54"/>
        <end position="56"/>
    </location>
</feature>
<feature type="helix" evidence="15">
    <location>
        <begin position="57"/>
        <end position="66"/>
    </location>
</feature>
<feature type="strand" evidence="13">
    <location>
        <begin position="67"/>
        <end position="69"/>
    </location>
</feature>
<feature type="helix" evidence="15">
    <location>
        <begin position="70"/>
        <end position="83"/>
    </location>
</feature>
<feature type="helix" evidence="15">
    <location>
        <begin position="86"/>
        <end position="88"/>
    </location>
</feature>
<feature type="helix" evidence="15">
    <location>
        <begin position="89"/>
        <end position="103"/>
    </location>
</feature>
<feature type="helix" evidence="15">
    <location>
        <begin position="106"/>
        <end position="111"/>
    </location>
</feature>
<feature type="helix" evidence="15">
    <location>
        <begin position="119"/>
        <end position="124"/>
    </location>
</feature>
<feature type="helix" evidence="15">
    <location>
        <begin position="127"/>
        <end position="160"/>
    </location>
</feature>
<feature type="helix" evidence="15">
    <location>
        <begin position="164"/>
        <end position="179"/>
    </location>
</feature>
<feature type="helix" evidence="15">
    <location>
        <begin position="191"/>
        <end position="212"/>
    </location>
</feature>
<feature type="helix" evidence="15">
    <location>
        <begin position="216"/>
        <end position="225"/>
    </location>
</feature>
<feature type="strand" evidence="15">
    <location>
        <begin position="238"/>
        <end position="242"/>
    </location>
</feature>
<feature type="helix" evidence="15">
    <location>
        <begin position="244"/>
        <end position="259"/>
    </location>
</feature>
<feature type="helix" evidence="15">
    <location>
        <begin position="264"/>
        <end position="270"/>
    </location>
</feature>
<feature type="helix" evidence="15">
    <location>
        <begin position="276"/>
        <end position="306"/>
    </location>
</feature>
<feature type="strand" evidence="15">
    <location>
        <begin position="308"/>
        <end position="310"/>
    </location>
</feature>
<feature type="helix" evidence="15">
    <location>
        <begin position="313"/>
        <end position="315"/>
    </location>
</feature>
<feature type="helix" evidence="14">
    <location>
        <begin position="321"/>
        <end position="323"/>
    </location>
</feature>
<feature type="helix" evidence="15">
    <location>
        <begin position="324"/>
        <end position="332"/>
    </location>
</feature>
<feature type="strand" evidence="15">
    <location>
        <begin position="334"/>
        <end position="338"/>
    </location>
</feature>
<feature type="helix" evidence="15">
    <location>
        <begin position="339"/>
        <end position="369"/>
    </location>
</feature>
<feature type="turn" evidence="15">
    <location>
        <begin position="370"/>
        <end position="374"/>
    </location>
</feature>
<feature type="helix" evidence="15">
    <location>
        <begin position="380"/>
        <end position="408"/>
    </location>
</feature>
<feature type="helix" evidence="15">
    <location>
        <begin position="412"/>
        <end position="436"/>
    </location>
</feature>
<feature type="helix" evidence="15">
    <location>
        <begin position="442"/>
        <end position="465"/>
    </location>
</feature>
<feature type="turn" evidence="15">
    <location>
        <begin position="470"/>
        <end position="474"/>
    </location>
</feature>
<feature type="turn" evidence="15">
    <location>
        <begin position="514"/>
        <end position="520"/>
    </location>
</feature>
<feature type="helix" evidence="15">
    <location>
        <begin position="525"/>
        <end position="545"/>
    </location>
</feature>
<feature type="helix" evidence="14">
    <location>
        <begin position="550"/>
        <end position="552"/>
    </location>
</feature>
<feature type="strand" evidence="13">
    <location>
        <begin position="555"/>
        <end position="559"/>
    </location>
</feature>
<proteinExistence type="evidence at protein level"/>
<sequence>MEGAEAGARATFGAWDYGVFATMLLVSTGIGLWVGLARGGQRSADDFFTGGRQLAAVPVGLSLAASFMSAVQVLGVPAEAARYGLKFLWMCAGQLLNSLLTAFLFLPIFYRLGLTSTYQYLELRFSRAVRLCGTLQYLVATMLYTGIVIYAPALILNQVTGLDIWASLLSTGIICTLYTTVGGMKAVVWTDVFQVVVMLVGFWVILARGVILLGGPRNVLSLAQNHSRINLMDFDPDPRSRYTFWTFIVGGTLVWLSMYGVNQAQVQRYVACHTEGKAKLALLVNQLGLFLIVASAACCGIVMFVYYKDCDPLLTGRISAPDQYMPLLVLDIFEDLPGVPGLFLACAYSGTLSTASTSINAMAAVTVEDLIKPRMPGLAPRKLVFISKGLSFIYGSACLTVAALSSLLGGGVLQGSFTVMGVISGPLLGAFTLGMLLPACNTPGVLSGLAAGLAVSLWVAVGATLYPPGEQTMGVLPTSAAGCTNDSVLLGPPGATNASNGIPSSGMDTGRPALADTFYAISYLYYGALGTLTTMLCGALISYLTGPTKRSSLGPGLLWWDLARQTASVAPKEDTATLEESLVKGPEDIPAVTKKPPGLKPGAETHPLYLGHDVETNL</sequence>
<evidence type="ECO:0000250" key="1">
    <source>
        <dbReference type="UniProtKB" id="Q92911"/>
    </source>
</evidence>
<evidence type="ECO:0000255" key="2"/>
<evidence type="ECO:0000256" key="3">
    <source>
        <dbReference type="SAM" id="MobiDB-lite"/>
    </source>
</evidence>
<evidence type="ECO:0000269" key="4">
    <source>
    </source>
</evidence>
<evidence type="ECO:0000269" key="5">
    <source>
    </source>
</evidence>
<evidence type="ECO:0000269" key="6">
    <source>
    </source>
</evidence>
<evidence type="ECO:0000269" key="7">
    <source>
    </source>
</evidence>
<evidence type="ECO:0000303" key="8">
    <source>
    </source>
</evidence>
<evidence type="ECO:0000305" key="9"/>
<evidence type="ECO:0007744" key="10">
    <source>
        <dbReference type="PDB" id="7UUY"/>
    </source>
</evidence>
<evidence type="ECO:0007744" key="11">
    <source>
        <dbReference type="PDB" id="7UUZ"/>
    </source>
</evidence>
<evidence type="ECO:0007744" key="12">
    <source>
        <dbReference type="PDB" id="7UV0"/>
    </source>
</evidence>
<evidence type="ECO:0007829" key="13">
    <source>
        <dbReference type="PDB" id="7UUY"/>
    </source>
</evidence>
<evidence type="ECO:0007829" key="14">
    <source>
        <dbReference type="PDB" id="7UUZ"/>
    </source>
</evidence>
<evidence type="ECO:0007829" key="15">
    <source>
        <dbReference type="PDB" id="7UV0"/>
    </source>
</evidence>
<reference key="1">
    <citation type="journal article" date="1996" name="Nature">
        <title>Cloning and characterization of the thyroid iodide transporter.</title>
        <authorList>
            <person name="Dai G."/>
            <person name="Levy O."/>
            <person name="Carrasco N."/>
        </authorList>
    </citation>
    <scope>NUCLEOTIDE SEQUENCE [MRNA]</scope>
    <scope>FUNCTION</scope>
    <scope>TRANSPORTER ACTIVITY</scope>
    <source>
        <tissue>Thyroid</tissue>
    </source>
</reference>
<reference key="2">
    <citation type="journal article" date="1997" name="J. Biol. Chem.">
        <title>Thyroid Na+/I- symporter. Mechanism, stoichiometry, and specificity.</title>
        <authorList>
            <person name="Eskandari S."/>
            <person name="Loo D.D."/>
            <person name="Dai G."/>
            <person name="Levy O."/>
            <person name="Wright E.M."/>
            <person name="Carrasco N."/>
        </authorList>
    </citation>
    <scope>FUNCTION</scope>
    <scope>TRANSPORTER ACTIVITY</scope>
    <scope>SUBCELLULAR LOCATION</scope>
</reference>
<reference key="3">
    <citation type="journal article" date="2020" name="PLoS ONE">
        <title>Inter-species variation in monovalent anion substrate selectivity and inhibitor sensitivity in the sodium iodide symporter (NIS).</title>
        <authorList>
            <person name="Concilio S.C."/>
            <person name="Zhekova H.R."/>
            <person name="Noskov S.Y."/>
            <person name="Russell S.J."/>
        </authorList>
    </citation>
    <scope>FUNCTION</scope>
    <scope>TRANSPORTER ACTIVITY</scope>
    <scope>ACTIVITY REGULATION</scope>
</reference>
<reference evidence="10 11 12" key="4">
    <citation type="journal article" date="2022" name="Nature">
        <title>Structural insights into the mechanism of the sodium/iodide symporter.</title>
        <authorList>
            <person name="Ravera S."/>
            <person name="Nicola J.P."/>
            <person name="Salazar-De Simone G."/>
            <person name="Sigworth F.J."/>
            <person name="Karakas E."/>
            <person name="Amzel L.M."/>
            <person name="Bianchet M.A."/>
            <person name="Carrasco N."/>
        </authorList>
    </citation>
    <scope>STRUCTURE BY ELECTRON MICROSCOPY (3.10 ANGSTROMS) OF 2-618 OF MUTANT GLN-225; GLN-485 AND GLN-497 IN COMPLEX WITH SODIUM; IODIDE AND PERRHENATE</scope>
    <scope>FUNCTION</scope>
    <scope>TRANSPORTER ACTIVITY</scope>
    <scope>ACTIVITY REGULATION</scope>
    <scope>SUBUNIT</scope>
    <scope>SUBCELLULAR LOCATION</scope>
    <scope>TOPOLOGY</scope>
    <scope>MUTAGENESIS OF SER-69; GLN-72; TYR-144; ASN-225; SER-416; PHE-417; ASN-485 AND ASN-497</scope>
</reference>
<accession>Q63008</accession>
<dbReference type="EMBL" id="U60282">
    <property type="protein sequence ID" value="AAB03338.1"/>
    <property type="molecule type" value="mRNA"/>
</dbReference>
<dbReference type="PIR" id="S68513">
    <property type="entry name" value="S68513"/>
</dbReference>
<dbReference type="RefSeq" id="NP_443215.2">
    <property type="nucleotide sequence ID" value="NM_052983.2"/>
</dbReference>
<dbReference type="PDB" id="7UUY">
    <property type="method" value="EM"/>
    <property type="resolution" value="3.30 A"/>
    <property type="chains" value="A=2-618"/>
</dbReference>
<dbReference type="PDB" id="7UUZ">
    <property type="method" value="EM"/>
    <property type="resolution" value="3.20 A"/>
    <property type="chains" value="A=2-618"/>
</dbReference>
<dbReference type="PDB" id="7UV0">
    <property type="method" value="EM"/>
    <property type="resolution" value="3.10 A"/>
    <property type="chains" value="A=2-618"/>
</dbReference>
<dbReference type="PDBsum" id="7UUY"/>
<dbReference type="PDBsum" id="7UUZ"/>
<dbReference type="PDBsum" id="7UV0"/>
<dbReference type="EMDB" id="EMD-26806"/>
<dbReference type="EMDB" id="EMD-26807"/>
<dbReference type="EMDB" id="EMD-26808"/>
<dbReference type="SMR" id="Q63008"/>
<dbReference type="FunCoup" id="Q63008">
    <property type="interactions" value="10"/>
</dbReference>
<dbReference type="STRING" id="10116.ENSRNOP00000025577"/>
<dbReference type="BindingDB" id="Q63008"/>
<dbReference type="ChEMBL" id="CHEMBL2331047"/>
<dbReference type="GlyCosmos" id="Q63008">
    <property type="glycosylation" value="2 sites, No reported glycans"/>
</dbReference>
<dbReference type="GlyGen" id="Q63008">
    <property type="glycosylation" value="3 sites"/>
</dbReference>
<dbReference type="iPTMnet" id="Q63008"/>
<dbReference type="PhosphoSitePlus" id="Q63008"/>
<dbReference type="PaxDb" id="10116-ENSRNOP00000025577"/>
<dbReference type="GeneID" id="114613"/>
<dbReference type="KEGG" id="rno:114613"/>
<dbReference type="UCSC" id="RGD:69267">
    <property type="organism name" value="rat"/>
</dbReference>
<dbReference type="AGR" id="RGD:69267"/>
<dbReference type="CTD" id="6528"/>
<dbReference type="RGD" id="69267">
    <property type="gene designation" value="Slc5a5"/>
</dbReference>
<dbReference type="eggNOG" id="KOG2349">
    <property type="taxonomic scope" value="Eukaryota"/>
</dbReference>
<dbReference type="InParanoid" id="Q63008"/>
<dbReference type="OrthoDB" id="56548at9989"/>
<dbReference type="PhylomeDB" id="Q63008"/>
<dbReference type="Reactome" id="R-RNO-209968">
    <property type="pathway name" value="Thyroxine biosynthesis"/>
</dbReference>
<dbReference type="Reactome" id="R-RNO-428643">
    <property type="pathway name" value="Organic anion transporters"/>
</dbReference>
<dbReference type="PRO" id="PR:Q63008"/>
<dbReference type="Proteomes" id="UP000002494">
    <property type="component" value="Unplaced"/>
</dbReference>
<dbReference type="GO" id="GO:0005737">
    <property type="term" value="C:cytoplasm"/>
    <property type="evidence" value="ECO:0000250"/>
    <property type="project" value="UniProtKB"/>
</dbReference>
<dbReference type="GO" id="GO:0005634">
    <property type="term" value="C:nucleus"/>
    <property type="evidence" value="ECO:0000266"/>
    <property type="project" value="RGD"/>
</dbReference>
<dbReference type="GO" id="GO:0005886">
    <property type="term" value="C:plasma membrane"/>
    <property type="evidence" value="ECO:0000314"/>
    <property type="project" value="UniProtKB"/>
</dbReference>
<dbReference type="GO" id="GO:0015111">
    <property type="term" value="F:iodide transmembrane transporter activity"/>
    <property type="evidence" value="ECO:0000315"/>
    <property type="project" value="ARUK-UCL"/>
</dbReference>
<dbReference type="GO" id="GO:0015373">
    <property type="term" value="F:monoatomic anion:sodium symporter activity"/>
    <property type="evidence" value="ECO:0000266"/>
    <property type="project" value="RGD"/>
</dbReference>
<dbReference type="GO" id="GO:0042803">
    <property type="term" value="F:protein homodimerization activity"/>
    <property type="evidence" value="ECO:0000266"/>
    <property type="project" value="RGD"/>
</dbReference>
<dbReference type="GO" id="GO:0008507">
    <property type="term" value="F:sodium:iodide symporter activity"/>
    <property type="evidence" value="ECO:0000314"/>
    <property type="project" value="UniProtKB"/>
</dbReference>
<dbReference type="GO" id="GO:0015293">
    <property type="term" value="F:symporter activity"/>
    <property type="evidence" value="ECO:0000266"/>
    <property type="project" value="RGD"/>
</dbReference>
<dbReference type="GO" id="GO:0071320">
    <property type="term" value="P:cellular response to cAMP"/>
    <property type="evidence" value="ECO:0000266"/>
    <property type="project" value="RGD"/>
</dbReference>
<dbReference type="GO" id="GO:1904322">
    <property type="term" value="P:cellular response to forskolin"/>
    <property type="evidence" value="ECO:0000266"/>
    <property type="project" value="RGD"/>
</dbReference>
<dbReference type="GO" id="GO:0071371">
    <property type="term" value="P:cellular response to gonadotropin stimulus"/>
    <property type="evidence" value="ECO:0000266"/>
    <property type="project" value="RGD"/>
</dbReference>
<dbReference type="GO" id="GO:1904401">
    <property type="term" value="P:cellular response to Thyroid stimulating hormone"/>
    <property type="evidence" value="ECO:0000266"/>
    <property type="project" value="RGD"/>
</dbReference>
<dbReference type="GO" id="GO:1904200">
    <property type="term" value="P:iodide transmembrane transport"/>
    <property type="evidence" value="ECO:0000315"/>
    <property type="project" value="ARUK-UCL"/>
</dbReference>
<dbReference type="GO" id="GO:0015705">
    <property type="term" value="P:iodide transport"/>
    <property type="evidence" value="ECO:0000314"/>
    <property type="project" value="RGD"/>
</dbReference>
<dbReference type="GO" id="GO:0006814">
    <property type="term" value="P:sodium ion transport"/>
    <property type="evidence" value="ECO:0000314"/>
    <property type="project" value="RGD"/>
</dbReference>
<dbReference type="GO" id="GO:0006590">
    <property type="term" value="P:thyroid hormone generation"/>
    <property type="evidence" value="ECO:0000304"/>
    <property type="project" value="RGD"/>
</dbReference>
<dbReference type="CDD" id="cd11503">
    <property type="entry name" value="SLC5sbd_NIS"/>
    <property type="match status" value="1"/>
</dbReference>
<dbReference type="FunFam" id="1.20.1730.10:FF:000007">
    <property type="entry name" value="Sodium-coupled monocarboxylate transporter 2"/>
    <property type="match status" value="1"/>
</dbReference>
<dbReference type="Gene3D" id="1.20.1730.10">
    <property type="entry name" value="Sodium/glucose cotransporter"/>
    <property type="match status" value="1"/>
</dbReference>
<dbReference type="InterPro" id="IPR038377">
    <property type="entry name" value="Na/Glc_symporter_sf"/>
</dbReference>
<dbReference type="InterPro" id="IPR001734">
    <property type="entry name" value="Na/solute_symporter"/>
</dbReference>
<dbReference type="InterPro" id="IPR018212">
    <property type="entry name" value="Na/solute_symporter_CS"/>
</dbReference>
<dbReference type="InterPro" id="IPR035689">
    <property type="entry name" value="SLC5A5"/>
</dbReference>
<dbReference type="InterPro" id="IPR051163">
    <property type="entry name" value="Sodium:Solute_Symporter_SSF"/>
</dbReference>
<dbReference type="NCBIfam" id="TIGR00813">
    <property type="entry name" value="sss"/>
    <property type="match status" value="1"/>
</dbReference>
<dbReference type="PANTHER" id="PTHR42985">
    <property type="entry name" value="SODIUM-COUPLED MONOCARBOXYLATE TRANSPORTER"/>
    <property type="match status" value="1"/>
</dbReference>
<dbReference type="PANTHER" id="PTHR42985:SF11">
    <property type="entry name" value="SODIUM_IODIDE COTRANSPORTER"/>
    <property type="match status" value="1"/>
</dbReference>
<dbReference type="Pfam" id="PF00474">
    <property type="entry name" value="SSF"/>
    <property type="match status" value="1"/>
</dbReference>
<dbReference type="PROSITE" id="PS00456">
    <property type="entry name" value="NA_SOLUT_SYMP_1"/>
    <property type="match status" value="1"/>
</dbReference>
<dbReference type="PROSITE" id="PS50283">
    <property type="entry name" value="NA_SOLUT_SYMP_3"/>
    <property type="match status" value="1"/>
</dbReference>
<name>SC5A5_RAT</name>
<comment type="function">
    <text evidence="4 5 6 7">Sodium:iodide symporter that mediates the transport of iodide into the thyroid gland (PubMed:32084174, PubMed:36517601, PubMed:8559252, PubMed:9341168). Can also mediate the transport of chlorate, thiocynate, nitrate and selenocynate (PubMed:9341168).</text>
</comment>
<comment type="catalytic activity">
    <reaction evidence="4 5 6 7">
        <text>iodide(out) + 2 Na(+)(out) = iodide(in) + 2 Na(+)(in)</text>
        <dbReference type="Rhea" id="RHEA:71207"/>
        <dbReference type="ChEBI" id="CHEBI:16382"/>
        <dbReference type="ChEBI" id="CHEBI:29101"/>
    </reaction>
</comment>
<comment type="catalytic activity">
    <reaction evidence="5 7">
        <text>chlorate(out) + 2 Na(+)(out) = chlorate(in) + 2 Na(+)(in)</text>
        <dbReference type="Rhea" id="RHEA:71211"/>
        <dbReference type="ChEBI" id="CHEBI:29101"/>
        <dbReference type="ChEBI" id="CHEBI:49709"/>
    </reaction>
</comment>
<comment type="catalytic activity">
    <reaction evidence="7">
        <text>thiocyanate(out) + 2 Na(+)(out) = thiocyanate(in) + 2 Na(+)(in)</text>
        <dbReference type="Rhea" id="RHEA:71215"/>
        <dbReference type="ChEBI" id="CHEBI:18022"/>
        <dbReference type="ChEBI" id="CHEBI:29101"/>
    </reaction>
</comment>
<comment type="catalytic activity">
    <reaction evidence="7">
        <text>nitrate(out) + 2 Na(+)(out) = nitrate(in) + 2 Na(+)(in)</text>
        <dbReference type="Rhea" id="RHEA:71219"/>
        <dbReference type="ChEBI" id="CHEBI:17632"/>
        <dbReference type="ChEBI" id="CHEBI:29101"/>
    </reaction>
</comment>
<comment type="catalytic activity">
    <reaction evidence="7">
        <text>selenocyanate(out) + 2 Na(+)(out) = selenocyanate(in) + 2 Na(+)(in)</text>
        <dbReference type="Rhea" id="RHEA:71227"/>
        <dbReference type="ChEBI" id="CHEBI:29101"/>
        <dbReference type="ChEBI" id="CHEBI:29445"/>
    </reaction>
</comment>
<comment type="activity regulation">
    <text evidence="4 5">Perchlorate inhibits iodide transport activity (PubMed:32084174). Oxyanions inhibit iodide transport activity by blocking the binding sites for iodide and one of the sodium ions (PubMed:36517601).</text>
</comment>
<comment type="subunit">
    <text evidence="5">Monomer.</text>
</comment>
<comment type="subcellular location">
    <subcellularLocation>
        <location evidence="5 7">Cell membrane</location>
        <topology evidence="5">Multi-pass membrane protein</topology>
    </subcellularLocation>
    <subcellularLocation>
        <location evidence="1">Cytoplasm</location>
    </subcellularLocation>
</comment>
<comment type="similarity">
    <text evidence="9">Belongs to the sodium:solute symporter (SSF) (TC 2.A.21) family.</text>
</comment>
<gene>
    <name type="primary">Slc5a5</name>
    <name evidence="8" type="synonym">Nis</name>
</gene>